<reference key="1">
    <citation type="submission" date="2008-03" db="EMBL/GenBank/DDBJ databases">
        <title>Complete sequence of chromosome of Methylobacterium radiotolerans JCM 2831.</title>
        <authorList>
            <consortium name="US DOE Joint Genome Institute"/>
            <person name="Copeland A."/>
            <person name="Lucas S."/>
            <person name="Lapidus A."/>
            <person name="Glavina del Rio T."/>
            <person name="Dalin E."/>
            <person name="Tice H."/>
            <person name="Bruce D."/>
            <person name="Goodwin L."/>
            <person name="Pitluck S."/>
            <person name="Kiss H."/>
            <person name="Brettin T."/>
            <person name="Detter J.C."/>
            <person name="Han C."/>
            <person name="Kuske C.R."/>
            <person name="Schmutz J."/>
            <person name="Larimer F."/>
            <person name="Land M."/>
            <person name="Hauser L."/>
            <person name="Kyrpides N."/>
            <person name="Mikhailova N."/>
            <person name="Marx C.J."/>
            <person name="Richardson P."/>
        </authorList>
    </citation>
    <scope>NUCLEOTIDE SEQUENCE [LARGE SCALE GENOMIC DNA]</scope>
    <source>
        <strain>ATCC 27329 / DSM 1819 / JCM 2831 / NBRC 15690 / NCIMB 10815 / 0-1</strain>
    </source>
</reference>
<protein>
    <recommendedName>
        <fullName evidence="1">Adenylate kinase</fullName>
        <shortName evidence="1">AK</shortName>
        <ecNumber evidence="1">2.7.4.3</ecNumber>
    </recommendedName>
    <alternativeName>
        <fullName evidence="1">ATP-AMP transphosphorylase</fullName>
    </alternativeName>
    <alternativeName>
        <fullName evidence="1">ATP:AMP phosphotransferase</fullName>
    </alternativeName>
    <alternativeName>
        <fullName evidence="1">Adenylate monophosphate kinase</fullName>
    </alternativeName>
</protein>
<evidence type="ECO:0000255" key="1">
    <source>
        <dbReference type="HAMAP-Rule" id="MF_00235"/>
    </source>
</evidence>
<keyword id="KW-0067">ATP-binding</keyword>
<keyword id="KW-0963">Cytoplasm</keyword>
<keyword id="KW-0418">Kinase</keyword>
<keyword id="KW-0545">Nucleotide biosynthesis</keyword>
<keyword id="KW-0547">Nucleotide-binding</keyword>
<keyword id="KW-0808">Transferase</keyword>
<comment type="function">
    <text evidence="1">Catalyzes the reversible transfer of the terminal phosphate group between ATP and AMP. Plays an important role in cellular energy homeostasis and in adenine nucleotide metabolism.</text>
</comment>
<comment type="catalytic activity">
    <reaction evidence="1">
        <text>AMP + ATP = 2 ADP</text>
        <dbReference type="Rhea" id="RHEA:12973"/>
        <dbReference type="ChEBI" id="CHEBI:30616"/>
        <dbReference type="ChEBI" id="CHEBI:456215"/>
        <dbReference type="ChEBI" id="CHEBI:456216"/>
        <dbReference type="EC" id="2.7.4.3"/>
    </reaction>
</comment>
<comment type="pathway">
    <text evidence="1">Purine metabolism; AMP biosynthesis via salvage pathway; AMP from ADP: step 1/1.</text>
</comment>
<comment type="subunit">
    <text evidence="1">Monomer.</text>
</comment>
<comment type="subcellular location">
    <subcellularLocation>
        <location evidence="1">Cytoplasm</location>
    </subcellularLocation>
</comment>
<comment type="domain">
    <text evidence="1">Consists of three domains, a large central CORE domain and two small peripheral domains, NMPbind and LID, which undergo movements during catalysis. The LID domain closes over the site of phosphoryl transfer upon ATP binding. Assembling and dissambling the active center during each catalytic cycle provides an effective means to prevent ATP hydrolysis.</text>
</comment>
<comment type="similarity">
    <text evidence="1">Belongs to the adenylate kinase family.</text>
</comment>
<dbReference type="EC" id="2.7.4.3" evidence="1"/>
<dbReference type="EMBL" id="CP001001">
    <property type="protein sequence ID" value="ACB24192.1"/>
    <property type="molecule type" value="Genomic_DNA"/>
</dbReference>
<dbReference type="RefSeq" id="WP_012319169.1">
    <property type="nucleotide sequence ID" value="NC_010505.1"/>
</dbReference>
<dbReference type="SMR" id="B1LWQ5"/>
<dbReference type="STRING" id="426355.Mrad2831_2197"/>
<dbReference type="GeneID" id="6138229"/>
<dbReference type="KEGG" id="mrd:Mrad2831_2197"/>
<dbReference type="eggNOG" id="COG0563">
    <property type="taxonomic scope" value="Bacteria"/>
</dbReference>
<dbReference type="HOGENOM" id="CLU_032354_1_2_5"/>
<dbReference type="OrthoDB" id="9805030at2"/>
<dbReference type="UniPathway" id="UPA00588">
    <property type="reaction ID" value="UER00649"/>
</dbReference>
<dbReference type="Proteomes" id="UP000006589">
    <property type="component" value="Chromosome"/>
</dbReference>
<dbReference type="GO" id="GO:0005737">
    <property type="term" value="C:cytoplasm"/>
    <property type="evidence" value="ECO:0007669"/>
    <property type="project" value="UniProtKB-SubCell"/>
</dbReference>
<dbReference type="GO" id="GO:0004017">
    <property type="term" value="F:adenylate kinase activity"/>
    <property type="evidence" value="ECO:0007669"/>
    <property type="project" value="UniProtKB-UniRule"/>
</dbReference>
<dbReference type="GO" id="GO:0005524">
    <property type="term" value="F:ATP binding"/>
    <property type="evidence" value="ECO:0007669"/>
    <property type="project" value="UniProtKB-UniRule"/>
</dbReference>
<dbReference type="GO" id="GO:0044209">
    <property type="term" value="P:AMP salvage"/>
    <property type="evidence" value="ECO:0007669"/>
    <property type="project" value="UniProtKB-UniRule"/>
</dbReference>
<dbReference type="CDD" id="cd01428">
    <property type="entry name" value="ADK"/>
    <property type="match status" value="1"/>
</dbReference>
<dbReference type="Gene3D" id="3.40.50.300">
    <property type="entry name" value="P-loop containing nucleotide triphosphate hydrolases"/>
    <property type="match status" value="1"/>
</dbReference>
<dbReference type="HAMAP" id="MF_00235">
    <property type="entry name" value="Adenylate_kinase_Adk"/>
    <property type="match status" value="1"/>
</dbReference>
<dbReference type="InterPro" id="IPR006259">
    <property type="entry name" value="Adenyl_kin_sub"/>
</dbReference>
<dbReference type="InterPro" id="IPR000850">
    <property type="entry name" value="Adenylat/UMP-CMP_kin"/>
</dbReference>
<dbReference type="InterPro" id="IPR033690">
    <property type="entry name" value="Adenylat_kinase_CS"/>
</dbReference>
<dbReference type="InterPro" id="IPR027417">
    <property type="entry name" value="P-loop_NTPase"/>
</dbReference>
<dbReference type="NCBIfam" id="TIGR01351">
    <property type="entry name" value="adk"/>
    <property type="match status" value="1"/>
</dbReference>
<dbReference type="NCBIfam" id="NF001381">
    <property type="entry name" value="PRK00279.1-3"/>
    <property type="match status" value="1"/>
</dbReference>
<dbReference type="NCBIfam" id="NF011100">
    <property type="entry name" value="PRK14527.1"/>
    <property type="match status" value="1"/>
</dbReference>
<dbReference type="NCBIfam" id="NF011104">
    <property type="entry name" value="PRK14531.1"/>
    <property type="match status" value="1"/>
</dbReference>
<dbReference type="NCBIfam" id="NF011105">
    <property type="entry name" value="PRK14532.1"/>
    <property type="match status" value="1"/>
</dbReference>
<dbReference type="PANTHER" id="PTHR23359">
    <property type="entry name" value="NUCLEOTIDE KINASE"/>
    <property type="match status" value="1"/>
</dbReference>
<dbReference type="Pfam" id="PF00406">
    <property type="entry name" value="ADK"/>
    <property type="match status" value="1"/>
</dbReference>
<dbReference type="PRINTS" id="PR00094">
    <property type="entry name" value="ADENYLTKNASE"/>
</dbReference>
<dbReference type="SUPFAM" id="SSF52540">
    <property type="entry name" value="P-loop containing nucleoside triphosphate hydrolases"/>
    <property type="match status" value="1"/>
</dbReference>
<dbReference type="PROSITE" id="PS00113">
    <property type="entry name" value="ADENYLATE_KINASE"/>
    <property type="match status" value="1"/>
</dbReference>
<name>KAD_METRJ</name>
<gene>
    <name evidence="1" type="primary">adk</name>
    <name type="ordered locus">Mrad2831_2197</name>
</gene>
<organism>
    <name type="scientific">Methylobacterium radiotolerans (strain ATCC 27329 / DSM 1819 / JCM 2831 / NBRC 15690 / NCIMB 10815 / 0-1)</name>
    <dbReference type="NCBI Taxonomy" id="426355"/>
    <lineage>
        <taxon>Bacteria</taxon>
        <taxon>Pseudomonadati</taxon>
        <taxon>Pseudomonadota</taxon>
        <taxon>Alphaproteobacteria</taxon>
        <taxon>Hyphomicrobiales</taxon>
        <taxon>Methylobacteriaceae</taxon>
        <taxon>Methylobacterium</taxon>
    </lineage>
</organism>
<proteinExistence type="inferred from homology"/>
<sequence length="200" mass="21336">MRIILLGPPGAGKGTQSERIVQRFGIPQLSTGDMLRAAVAAGTPVGLEAKAVMESGGLVSDRIVVGIVADRIEEPDARRGFILDGFPRTVAQAEALGEMLASKGLSLSAVVELKVDENALVGRIEKRAAETLARGQAVRKDDTPEVFKQRLEAYRAQTAPLSAYYAQKGTLETVDGMQPIDKVTADLMAVLEPHEERVAS</sequence>
<accession>B1LWQ5</accession>
<feature type="chain" id="PRO_1000100584" description="Adenylate kinase">
    <location>
        <begin position="1"/>
        <end position="200"/>
    </location>
</feature>
<feature type="region of interest" description="NMP" evidence="1">
    <location>
        <begin position="30"/>
        <end position="59"/>
    </location>
</feature>
<feature type="region of interest" description="LID" evidence="1">
    <location>
        <begin position="126"/>
        <end position="142"/>
    </location>
</feature>
<feature type="binding site" evidence="1">
    <location>
        <begin position="10"/>
        <end position="15"/>
    </location>
    <ligand>
        <name>ATP</name>
        <dbReference type="ChEBI" id="CHEBI:30616"/>
    </ligand>
</feature>
<feature type="binding site" evidence="1">
    <location>
        <position position="31"/>
    </location>
    <ligand>
        <name>AMP</name>
        <dbReference type="ChEBI" id="CHEBI:456215"/>
    </ligand>
</feature>
<feature type="binding site" evidence="1">
    <location>
        <position position="36"/>
    </location>
    <ligand>
        <name>AMP</name>
        <dbReference type="ChEBI" id="CHEBI:456215"/>
    </ligand>
</feature>
<feature type="binding site" evidence="1">
    <location>
        <begin position="57"/>
        <end position="59"/>
    </location>
    <ligand>
        <name>AMP</name>
        <dbReference type="ChEBI" id="CHEBI:456215"/>
    </ligand>
</feature>
<feature type="binding site" evidence="1">
    <location>
        <begin position="85"/>
        <end position="88"/>
    </location>
    <ligand>
        <name>AMP</name>
        <dbReference type="ChEBI" id="CHEBI:456215"/>
    </ligand>
</feature>
<feature type="binding site" evidence="1">
    <location>
        <position position="92"/>
    </location>
    <ligand>
        <name>AMP</name>
        <dbReference type="ChEBI" id="CHEBI:456215"/>
    </ligand>
</feature>
<feature type="binding site" evidence="1">
    <location>
        <position position="127"/>
    </location>
    <ligand>
        <name>ATP</name>
        <dbReference type="ChEBI" id="CHEBI:30616"/>
    </ligand>
</feature>
<feature type="binding site" evidence="1">
    <location>
        <position position="139"/>
    </location>
    <ligand>
        <name>AMP</name>
        <dbReference type="ChEBI" id="CHEBI:456215"/>
    </ligand>
</feature>
<feature type="binding site" evidence="1">
    <location>
        <position position="150"/>
    </location>
    <ligand>
        <name>AMP</name>
        <dbReference type="ChEBI" id="CHEBI:456215"/>
    </ligand>
</feature>
<feature type="binding site" evidence="1">
    <location>
        <position position="178"/>
    </location>
    <ligand>
        <name>ATP</name>
        <dbReference type="ChEBI" id="CHEBI:30616"/>
    </ligand>
</feature>